<gene>
    <name type="primary">chmp7</name>
    <name type="ORF">DDB_G0277133</name>
</gene>
<organism>
    <name type="scientific">Dictyostelium discoideum</name>
    <name type="common">Social amoeba</name>
    <dbReference type="NCBI Taxonomy" id="44689"/>
    <lineage>
        <taxon>Eukaryota</taxon>
        <taxon>Amoebozoa</taxon>
        <taxon>Evosea</taxon>
        <taxon>Eumycetozoa</taxon>
        <taxon>Dictyostelia</taxon>
        <taxon>Dictyosteliales</taxon>
        <taxon>Dictyosteliaceae</taxon>
        <taxon>Dictyostelium</taxon>
    </lineage>
</organism>
<name>CHMP7_DICDI</name>
<comment type="function">
    <text evidence="1">Plays a role in the endosomal sorting pathway.</text>
</comment>
<comment type="subcellular location">
    <subcellularLocation>
        <location evidence="1">Cytoplasm</location>
    </subcellularLocation>
</comment>
<comment type="similarity">
    <text evidence="4">Belongs to the SNF7 family.</text>
</comment>
<protein>
    <recommendedName>
        <fullName>Charged multivesicular body protein 7</fullName>
    </recommendedName>
</protein>
<evidence type="ECO:0000250" key="1"/>
<evidence type="ECO:0000255" key="2"/>
<evidence type="ECO:0000256" key="3">
    <source>
        <dbReference type="SAM" id="MobiDB-lite"/>
    </source>
</evidence>
<evidence type="ECO:0000305" key="4"/>
<reference key="1">
    <citation type="journal article" date="2002" name="Nature">
        <title>Sequence and analysis of chromosome 2 of Dictyostelium discoideum.</title>
        <authorList>
            <person name="Gloeckner G."/>
            <person name="Eichinger L."/>
            <person name="Szafranski K."/>
            <person name="Pachebat J.A."/>
            <person name="Bankier A.T."/>
            <person name="Dear P.H."/>
            <person name="Lehmann R."/>
            <person name="Baumgart C."/>
            <person name="Parra G."/>
            <person name="Abril J.F."/>
            <person name="Guigo R."/>
            <person name="Kumpf K."/>
            <person name="Tunggal B."/>
            <person name="Cox E.C."/>
            <person name="Quail M.A."/>
            <person name="Platzer M."/>
            <person name="Rosenthal A."/>
            <person name="Noegel A.A."/>
        </authorList>
    </citation>
    <scope>NUCLEOTIDE SEQUENCE [LARGE SCALE GENOMIC DNA]</scope>
    <source>
        <strain>AX4</strain>
    </source>
</reference>
<reference key="2">
    <citation type="journal article" date="2005" name="Nature">
        <title>The genome of the social amoeba Dictyostelium discoideum.</title>
        <authorList>
            <person name="Eichinger L."/>
            <person name="Pachebat J.A."/>
            <person name="Gloeckner G."/>
            <person name="Rajandream M.A."/>
            <person name="Sucgang R."/>
            <person name="Berriman M."/>
            <person name="Song J."/>
            <person name="Olsen R."/>
            <person name="Szafranski K."/>
            <person name="Xu Q."/>
            <person name="Tunggal B."/>
            <person name="Kummerfeld S."/>
            <person name="Madera M."/>
            <person name="Konfortov B.A."/>
            <person name="Rivero F."/>
            <person name="Bankier A.T."/>
            <person name="Lehmann R."/>
            <person name="Hamlin N."/>
            <person name="Davies R."/>
            <person name="Gaudet P."/>
            <person name="Fey P."/>
            <person name="Pilcher K."/>
            <person name="Chen G."/>
            <person name="Saunders D."/>
            <person name="Sodergren E.J."/>
            <person name="Davis P."/>
            <person name="Kerhornou A."/>
            <person name="Nie X."/>
            <person name="Hall N."/>
            <person name="Anjard C."/>
            <person name="Hemphill L."/>
            <person name="Bason N."/>
            <person name="Farbrother P."/>
            <person name="Desany B."/>
            <person name="Just E."/>
            <person name="Morio T."/>
            <person name="Rost R."/>
            <person name="Churcher C.M."/>
            <person name="Cooper J."/>
            <person name="Haydock S."/>
            <person name="van Driessche N."/>
            <person name="Cronin A."/>
            <person name="Goodhead I."/>
            <person name="Muzny D.M."/>
            <person name="Mourier T."/>
            <person name="Pain A."/>
            <person name="Lu M."/>
            <person name="Harper D."/>
            <person name="Lindsay R."/>
            <person name="Hauser H."/>
            <person name="James K.D."/>
            <person name="Quiles M."/>
            <person name="Madan Babu M."/>
            <person name="Saito T."/>
            <person name="Buchrieser C."/>
            <person name="Wardroper A."/>
            <person name="Felder M."/>
            <person name="Thangavelu M."/>
            <person name="Johnson D."/>
            <person name="Knights A."/>
            <person name="Loulseged H."/>
            <person name="Mungall K.L."/>
            <person name="Oliver K."/>
            <person name="Price C."/>
            <person name="Quail M.A."/>
            <person name="Urushihara H."/>
            <person name="Hernandez J."/>
            <person name="Rabbinowitsch E."/>
            <person name="Steffen D."/>
            <person name="Sanders M."/>
            <person name="Ma J."/>
            <person name="Kohara Y."/>
            <person name="Sharp S."/>
            <person name="Simmonds M.N."/>
            <person name="Spiegler S."/>
            <person name="Tivey A."/>
            <person name="Sugano S."/>
            <person name="White B."/>
            <person name="Walker D."/>
            <person name="Woodward J.R."/>
            <person name="Winckler T."/>
            <person name="Tanaka Y."/>
            <person name="Shaulsky G."/>
            <person name="Schleicher M."/>
            <person name="Weinstock G.M."/>
            <person name="Rosenthal A."/>
            <person name="Cox E.C."/>
            <person name="Chisholm R.L."/>
            <person name="Gibbs R.A."/>
            <person name="Loomis W.F."/>
            <person name="Platzer M."/>
            <person name="Kay R.R."/>
            <person name="Williams J.G."/>
            <person name="Dear P.H."/>
            <person name="Noegel A.A."/>
            <person name="Barrell B.G."/>
            <person name="Kuspa A."/>
        </authorList>
    </citation>
    <scope>NUCLEOTIDE SEQUENCE [LARGE SCALE GENOMIC DNA]</scope>
    <source>
        <strain>AX4</strain>
    </source>
</reference>
<sequence>MNNDKEINSEKSKRAINHFSNKKEIKNSDRRGILFSKLPSQQLNPDRYDNLMTFWNNSLIDISKSCNILIFTPKLLSTYFTVENVSPIYLPLILNEMIKTKFIVKYEEYIKDYGWSKWVWTKMVVQPFQYYTGLSTPNTETEKNVKFILPEMIKDKAEQLYQHQLKNMNSTTDNIISYINLEKSIKDWYITREELDLLLLVLFRDSKVLILTNNKIKNINNNNNGEDRIGIKFAFDGEKVQPIQETDFGILKLQTTYETLKQQESKLLTDIEEISNTIKESIRIKQKNHALLQLKKKKLLESILEKRATASTNIHEILFSIESAKSNQQIIESLCTGVSTLKKVNQEISVDQVDSILDDYQDAITNQREIDDAMKSGFNSVESLSSADIDEDQLEKELDQMLQDHLTLEKEEKQKQKQIEKEKQQQQQPPTSQFNPNLPIPLKNEEDELLKELESLSVTSNPLPKQDENKQKTSELI</sequence>
<keyword id="KW-0175">Coiled coil</keyword>
<keyword id="KW-0963">Cytoplasm</keyword>
<keyword id="KW-0653">Protein transport</keyword>
<keyword id="KW-1185">Reference proteome</keyword>
<keyword id="KW-0813">Transport</keyword>
<dbReference type="EMBL" id="AAFI02000019">
    <property type="protein sequence ID" value="EAL68878.1"/>
    <property type="molecule type" value="Genomic_DNA"/>
</dbReference>
<dbReference type="RefSeq" id="XP_642803.1">
    <property type="nucleotide sequence ID" value="XM_637711.1"/>
</dbReference>
<dbReference type="SMR" id="Q86K93"/>
<dbReference type="FunCoup" id="Q86K93">
    <property type="interactions" value="137"/>
</dbReference>
<dbReference type="STRING" id="44689.Q86K93"/>
<dbReference type="PaxDb" id="44689-DDB0266400"/>
<dbReference type="EnsemblProtists" id="EAL68878">
    <property type="protein sequence ID" value="EAL68878"/>
    <property type="gene ID" value="DDB_G0277133"/>
</dbReference>
<dbReference type="GeneID" id="8620866"/>
<dbReference type="KEGG" id="ddi:DDB_G0277133"/>
<dbReference type="dictyBase" id="DDB_G0277133"/>
<dbReference type="VEuPathDB" id="AmoebaDB:DDB_G0277133"/>
<dbReference type="eggNOG" id="KOG2911">
    <property type="taxonomic scope" value="Eukaryota"/>
</dbReference>
<dbReference type="HOGENOM" id="CLU_547641_0_0_1"/>
<dbReference type="InParanoid" id="Q86K93"/>
<dbReference type="OMA" id="NEQMATT"/>
<dbReference type="PhylomeDB" id="Q86K93"/>
<dbReference type="Reactome" id="R-DDI-1632852">
    <property type="pathway name" value="Macroautophagy"/>
</dbReference>
<dbReference type="Reactome" id="R-DDI-917729">
    <property type="pathway name" value="Endosomal Sorting Complex Required For Transport (ESCRT)"/>
</dbReference>
<dbReference type="Reactome" id="R-DDI-9668328">
    <property type="pathway name" value="Sealing of the nuclear envelope (NE) by ESCRT-III"/>
</dbReference>
<dbReference type="PRO" id="PR:Q86K93"/>
<dbReference type="Proteomes" id="UP000002195">
    <property type="component" value="Chromosome 2"/>
</dbReference>
<dbReference type="GO" id="GO:0009898">
    <property type="term" value="C:cytoplasmic side of plasma membrane"/>
    <property type="evidence" value="ECO:0000318"/>
    <property type="project" value="GO_Central"/>
</dbReference>
<dbReference type="GO" id="GO:0000815">
    <property type="term" value="C:ESCRT III complex"/>
    <property type="evidence" value="ECO:0000250"/>
    <property type="project" value="UniProtKB"/>
</dbReference>
<dbReference type="GO" id="GO:0097431">
    <property type="term" value="C:mitotic spindle pole"/>
    <property type="evidence" value="ECO:0000314"/>
    <property type="project" value="dictyBase"/>
</dbReference>
<dbReference type="GO" id="GO:0005771">
    <property type="term" value="C:multivesicular body"/>
    <property type="evidence" value="ECO:0000318"/>
    <property type="project" value="GO_Central"/>
</dbReference>
<dbReference type="GO" id="GO:0045324">
    <property type="term" value="P:late endosome to vacuole transport"/>
    <property type="evidence" value="ECO:0000250"/>
    <property type="project" value="UniProtKB"/>
</dbReference>
<dbReference type="GO" id="GO:0032511">
    <property type="term" value="P:late endosome to vacuole transport via multivesicular body sorting pathway"/>
    <property type="evidence" value="ECO:0000318"/>
    <property type="project" value="GO_Central"/>
</dbReference>
<dbReference type="GO" id="GO:0015031">
    <property type="term" value="P:protein transport"/>
    <property type="evidence" value="ECO:0007669"/>
    <property type="project" value="UniProtKB-KW"/>
</dbReference>
<dbReference type="GO" id="GO:0006900">
    <property type="term" value="P:vesicle budding from membrane"/>
    <property type="evidence" value="ECO:0000318"/>
    <property type="project" value="GO_Central"/>
</dbReference>
<dbReference type="Gene3D" id="6.10.140.1230">
    <property type="match status" value="1"/>
</dbReference>
<dbReference type="InterPro" id="IPR005024">
    <property type="entry name" value="Snf7_fam"/>
</dbReference>
<dbReference type="PANTHER" id="PTHR22761:SF96">
    <property type="entry name" value="BCDNA.GH08385"/>
    <property type="match status" value="1"/>
</dbReference>
<dbReference type="PANTHER" id="PTHR22761">
    <property type="entry name" value="CHARGED MULTIVESICULAR BODY PROTEIN"/>
    <property type="match status" value="1"/>
</dbReference>
<dbReference type="Pfam" id="PF03357">
    <property type="entry name" value="Snf7"/>
    <property type="match status" value="1"/>
</dbReference>
<feature type="chain" id="PRO_0000328396" description="Charged multivesicular body protein 7">
    <location>
        <begin position="1"/>
        <end position="477"/>
    </location>
</feature>
<feature type="region of interest" description="Disordered" evidence="3">
    <location>
        <begin position="411"/>
        <end position="477"/>
    </location>
</feature>
<feature type="coiled-coil region" evidence="2">
    <location>
        <begin position="252"/>
        <end position="280"/>
    </location>
</feature>
<feature type="coiled-coil region" evidence="2">
    <location>
        <begin position="382"/>
        <end position="428"/>
    </location>
</feature>
<feature type="compositionally biased region" description="Basic and acidic residues" evidence="3">
    <location>
        <begin position="411"/>
        <end position="424"/>
    </location>
</feature>
<feature type="compositionally biased region" description="Basic and acidic residues" evidence="3">
    <location>
        <begin position="465"/>
        <end position="477"/>
    </location>
</feature>
<accession>Q86K93</accession>
<accession>Q550D9</accession>
<proteinExistence type="inferred from homology"/>